<accession>Q2S8V6</accession>
<dbReference type="EMBL" id="CP000155">
    <property type="protein sequence ID" value="ABC32918.1"/>
    <property type="molecule type" value="Genomic_DNA"/>
</dbReference>
<dbReference type="RefSeq" id="WP_011399974.1">
    <property type="nucleotide sequence ID" value="NC_007645.1"/>
</dbReference>
<dbReference type="SMR" id="Q2S8V6"/>
<dbReference type="STRING" id="349521.HCH_06271"/>
<dbReference type="KEGG" id="hch:HCH_06271"/>
<dbReference type="eggNOG" id="COG0828">
    <property type="taxonomic scope" value="Bacteria"/>
</dbReference>
<dbReference type="HOGENOM" id="CLU_159258_1_0_6"/>
<dbReference type="OrthoDB" id="9799244at2"/>
<dbReference type="Proteomes" id="UP000000238">
    <property type="component" value="Chromosome"/>
</dbReference>
<dbReference type="GO" id="GO:1990904">
    <property type="term" value="C:ribonucleoprotein complex"/>
    <property type="evidence" value="ECO:0007669"/>
    <property type="project" value="UniProtKB-KW"/>
</dbReference>
<dbReference type="GO" id="GO:0005840">
    <property type="term" value="C:ribosome"/>
    <property type="evidence" value="ECO:0007669"/>
    <property type="project" value="UniProtKB-KW"/>
</dbReference>
<dbReference type="GO" id="GO:0003735">
    <property type="term" value="F:structural constituent of ribosome"/>
    <property type="evidence" value="ECO:0007669"/>
    <property type="project" value="InterPro"/>
</dbReference>
<dbReference type="GO" id="GO:0006412">
    <property type="term" value="P:translation"/>
    <property type="evidence" value="ECO:0007669"/>
    <property type="project" value="UniProtKB-UniRule"/>
</dbReference>
<dbReference type="Gene3D" id="1.20.5.1150">
    <property type="entry name" value="Ribosomal protein S8"/>
    <property type="match status" value="1"/>
</dbReference>
<dbReference type="HAMAP" id="MF_00358">
    <property type="entry name" value="Ribosomal_bS21"/>
    <property type="match status" value="1"/>
</dbReference>
<dbReference type="InterPro" id="IPR001911">
    <property type="entry name" value="Ribosomal_bS21"/>
</dbReference>
<dbReference type="InterPro" id="IPR018278">
    <property type="entry name" value="Ribosomal_bS21_CS"/>
</dbReference>
<dbReference type="InterPro" id="IPR038380">
    <property type="entry name" value="Ribosomal_bS21_sf"/>
</dbReference>
<dbReference type="NCBIfam" id="TIGR00030">
    <property type="entry name" value="S21p"/>
    <property type="match status" value="1"/>
</dbReference>
<dbReference type="PANTHER" id="PTHR21109">
    <property type="entry name" value="MITOCHONDRIAL 28S RIBOSOMAL PROTEIN S21"/>
    <property type="match status" value="1"/>
</dbReference>
<dbReference type="PANTHER" id="PTHR21109:SF22">
    <property type="entry name" value="SMALL RIBOSOMAL SUBUNIT PROTEIN BS21"/>
    <property type="match status" value="1"/>
</dbReference>
<dbReference type="Pfam" id="PF01165">
    <property type="entry name" value="Ribosomal_S21"/>
    <property type="match status" value="1"/>
</dbReference>
<dbReference type="PRINTS" id="PR00976">
    <property type="entry name" value="RIBOSOMALS21"/>
</dbReference>
<dbReference type="PROSITE" id="PS01181">
    <property type="entry name" value="RIBOSOMAL_S21"/>
    <property type="match status" value="1"/>
</dbReference>
<gene>
    <name evidence="1" type="primary">rpsU</name>
    <name type="ordered locus">HCH_06271</name>
</gene>
<sequence>MPSVKIKENEPFDVALRRFKRSCEKAGILSEVRRREFYEKPTSERKRKLAAAVKRHAKKVQREQRRFERLY</sequence>
<evidence type="ECO:0000255" key="1">
    <source>
        <dbReference type="HAMAP-Rule" id="MF_00358"/>
    </source>
</evidence>
<evidence type="ECO:0000305" key="2"/>
<name>RS21_HAHCH</name>
<protein>
    <recommendedName>
        <fullName evidence="1">Small ribosomal subunit protein bS21</fullName>
    </recommendedName>
    <alternativeName>
        <fullName evidence="2">30S ribosomal protein S21</fullName>
    </alternativeName>
</protein>
<reference key="1">
    <citation type="journal article" date="2005" name="Nucleic Acids Res.">
        <title>Genomic blueprint of Hahella chejuensis, a marine microbe producing an algicidal agent.</title>
        <authorList>
            <person name="Jeong H."/>
            <person name="Yim J.H."/>
            <person name="Lee C."/>
            <person name="Choi S.-H."/>
            <person name="Park Y.K."/>
            <person name="Yoon S.H."/>
            <person name="Hur C.-G."/>
            <person name="Kang H.-Y."/>
            <person name="Kim D."/>
            <person name="Lee H.H."/>
            <person name="Park K.H."/>
            <person name="Park S.-H."/>
            <person name="Park H.-S."/>
            <person name="Lee H.K."/>
            <person name="Oh T.K."/>
            <person name="Kim J.F."/>
        </authorList>
    </citation>
    <scope>NUCLEOTIDE SEQUENCE [LARGE SCALE GENOMIC DNA]</scope>
    <source>
        <strain>KCTC 2396</strain>
    </source>
</reference>
<organism>
    <name type="scientific">Hahella chejuensis (strain KCTC 2396)</name>
    <dbReference type="NCBI Taxonomy" id="349521"/>
    <lineage>
        <taxon>Bacteria</taxon>
        <taxon>Pseudomonadati</taxon>
        <taxon>Pseudomonadota</taxon>
        <taxon>Gammaproteobacteria</taxon>
        <taxon>Oceanospirillales</taxon>
        <taxon>Hahellaceae</taxon>
        <taxon>Hahella</taxon>
    </lineage>
</organism>
<proteinExistence type="inferred from homology"/>
<keyword id="KW-1185">Reference proteome</keyword>
<keyword id="KW-0687">Ribonucleoprotein</keyword>
<keyword id="KW-0689">Ribosomal protein</keyword>
<comment type="similarity">
    <text evidence="1">Belongs to the bacterial ribosomal protein bS21 family.</text>
</comment>
<feature type="chain" id="PRO_0000266689" description="Small ribosomal subunit protein bS21">
    <location>
        <begin position="1"/>
        <end position="71"/>
    </location>
</feature>